<comment type="function">
    <text evidence="1">Nucleotide-binding protein.</text>
</comment>
<comment type="similarity">
    <text evidence="1">Belongs to the YajQ family.</text>
</comment>
<feature type="chain" id="PRO_1000061397" description="Nucleotide-binding protein BPUM_1028">
    <location>
        <begin position="1"/>
        <end position="163"/>
    </location>
</feature>
<protein>
    <recommendedName>
        <fullName evidence="1">Nucleotide-binding protein BPUM_1028</fullName>
    </recommendedName>
</protein>
<gene>
    <name type="ordered locus">BPUM_1028</name>
</gene>
<reference key="1">
    <citation type="journal article" date="2007" name="PLoS ONE">
        <title>Paradoxical DNA repair and peroxide resistance gene conservation in Bacillus pumilus SAFR-032.</title>
        <authorList>
            <person name="Gioia J."/>
            <person name="Yerrapragada S."/>
            <person name="Qin X."/>
            <person name="Jiang H."/>
            <person name="Igboeli O.C."/>
            <person name="Muzny D."/>
            <person name="Dugan-Rocha S."/>
            <person name="Ding Y."/>
            <person name="Hawes A."/>
            <person name="Liu W."/>
            <person name="Perez L."/>
            <person name="Kovar C."/>
            <person name="Dinh H."/>
            <person name="Lee S."/>
            <person name="Nazareth L."/>
            <person name="Blyth P."/>
            <person name="Holder M."/>
            <person name="Buhay C."/>
            <person name="Tirumalai M.R."/>
            <person name="Liu Y."/>
            <person name="Dasgupta I."/>
            <person name="Bokhetache L."/>
            <person name="Fujita M."/>
            <person name="Karouia F."/>
            <person name="Eswara Moorthy P."/>
            <person name="Siefert J."/>
            <person name="Uzman A."/>
            <person name="Buzumbo P."/>
            <person name="Verma A."/>
            <person name="Zwiya H."/>
            <person name="McWilliams B.D."/>
            <person name="Olowu A."/>
            <person name="Clinkenbeard K.D."/>
            <person name="Newcombe D."/>
            <person name="Golebiewski L."/>
            <person name="Petrosino J.F."/>
            <person name="Nicholson W.L."/>
            <person name="Fox G.E."/>
            <person name="Venkateswaran K."/>
            <person name="Highlander S.K."/>
            <person name="Weinstock G.M."/>
        </authorList>
    </citation>
    <scope>NUCLEOTIDE SEQUENCE [LARGE SCALE GENOMIC DNA]</scope>
    <source>
        <strain>SAFR-032</strain>
    </source>
</reference>
<organism>
    <name type="scientific">Bacillus pumilus (strain SAFR-032)</name>
    <dbReference type="NCBI Taxonomy" id="315750"/>
    <lineage>
        <taxon>Bacteria</taxon>
        <taxon>Bacillati</taxon>
        <taxon>Bacillota</taxon>
        <taxon>Bacilli</taxon>
        <taxon>Bacillales</taxon>
        <taxon>Bacillaceae</taxon>
        <taxon>Bacillus</taxon>
    </lineage>
</organism>
<proteinExistence type="inferred from homology"/>
<dbReference type="EMBL" id="CP000813">
    <property type="protein sequence ID" value="ABV61712.1"/>
    <property type="molecule type" value="Genomic_DNA"/>
</dbReference>
<dbReference type="RefSeq" id="WP_012009527.1">
    <property type="nucleotide sequence ID" value="NZ_VEIS01000013.1"/>
</dbReference>
<dbReference type="SMR" id="A8FBU5"/>
<dbReference type="STRING" id="315750.BPUM_1028"/>
<dbReference type="KEGG" id="bpu:BPUM_1028"/>
<dbReference type="eggNOG" id="COG1666">
    <property type="taxonomic scope" value="Bacteria"/>
</dbReference>
<dbReference type="HOGENOM" id="CLU_099839_1_0_9"/>
<dbReference type="OrthoDB" id="9801447at2"/>
<dbReference type="Proteomes" id="UP000001355">
    <property type="component" value="Chromosome"/>
</dbReference>
<dbReference type="GO" id="GO:0005829">
    <property type="term" value="C:cytosol"/>
    <property type="evidence" value="ECO:0007669"/>
    <property type="project" value="TreeGrafter"/>
</dbReference>
<dbReference type="GO" id="GO:0000166">
    <property type="term" value="F:nucleotide binding"/>
    <property type="evidence" value="ECO:0007669"/>
    <property type="project" value="TreeGrafter"/>
</dbReference>
<dbReference type="CDD" id="cd11740">
    <property type="entry name" value="YajQ_like"/>
    <property type="match status" value="1"/>
</dbReference>
<dbReference type="FunFam" id="3.30.70.990:FF:000002">
    <property type="entry name" value="UPF0234 protein LEP1GSC067_4943"/>
    <property type="match status" value="1"/>
</dbReference>
<dbReference type="Gene3D" id="3.30.70.860">
    <property type="match status" value="1"/>
</dbReference>
<dbReference type="Gene3D" id="3.30.70.990">
    <property type="entry name" value="YajQ-like, domain 2"/>
    <property type="match status" value="1"/>
</dbReference>
<dbReference type="HAMAP" id="MF_00632">
    <property type="entry name" value="YajQ"/>
    <property type="match status" value="1"/>
</dbReference>
<dbReference type="InterPro" id="IPR007551">
    <property type="entry name" value="DUF520"/>
</dbReference>
<dbReference type="InterPro" id="IPR035571">
    <property type="entry name" value="UPF0234-like_C"/>
</dbReference>
<dbReference type="InterPro" id="IPR035570">
    <property type="entry name" value="UPF0234_N"/>
</dbReference>
<dbReference type="InterPro" id="IPR036183">
    <property type="entry name" value="YajQ-like_sf"/>
</dbReference>
<dbReference type="NCBIfam" id="NF003819">
    <property type="entry name" value="PRK05412.1"/>
    <property type="match status" value="1"/>
</dbReference>
<dbReference type="PANTHER" id="PTHR30476">
    <property type="entry name" value="UPF0234 PROTEIN YAJQ"/>
    <property type="match status" value="1"/>
</dbReference>
<dbReference type="PANTHER" id="PTHR30476:SF0">
    <property type="entry name" value="UPF0234 PROTEIN YAJQ"/>
    <property type="match status" value="1"/>
</dbReference>
<dbReference type="Pfam" id="PF04461">
    <property type="entry name" value="DUF520"/>
    <property type="match status" value="1"/>
</dbReference>
<dbReference type="SUPFAM" id="SSF89963">
    <property type="entry name" value="YajQ-like"/>
    <property type="match status" value="2"/>
</dbReference>
<evidence type="ECO:0000255" key="1">
    <source>
        <dbReference type="HAMAP-Rule" id="MF_00632"/>
    </source>
</evidence>
<sequence length="163" mass="18458">MAKESSFDIVSKVELPEVQNAVQAALKEIKNRYDFKGSKSDISLEKEELVLISDDDFKLEQLKDVLVTKLIKRNVPTKNIDYGKTEHALGGTVRQRAKLISGIDQDNAKKINALIKQSGIKVKSQFQDDQVRVTGKNKDDLQEVISLMRKADLPIDVQFINFR</sequence>
<keyword id="KW-0547">Nucleotide-binding</keyword>
<accession>A8FBU5</accession>
<name>Y1028_BACP2</name>